<keyword id="KW-0963">Cytoplasm</keyword>
<keyword id="KW-0448">Lipopolysaccharide biosynthesis</keyword>
<keyword id="KW-0548">Nucleotidyltransferase</keyword>
<keyword id="KW-1185">Reference proteome</keyword>
<keyword id="KW-0808">Transferase</keyword>
<accession>A3N2M5</accession>
<organism>
    <name type="scientific">Actinobacillus pleuropneumoniae serotype 5b (strain L20)</name>
    <dbReference type="NCBI Taxonomy" id="416269"/>
    <lineage>
        <taxon>Bacteria</taxon>
        <taxon>Pseudomonadati</taxon>
        <taxon>Pseudomonadota</taxon>
        <taxon>Gammaproteobacteria</taxon>
        <taxon>Pasteurellales</taxon>
        <taxon>Pasteurellaceae</taxon>
        <taxon>Actinobacillus</taxon>
    </lineage>
</organism>
<protein>
    <recommendedName>
        <fullName evidence="1">3-deoxy-manno-octulosonate cytidylyltransferase 2</fullName>
        <ecNumber evidence="1">2.7.7.38</ecNumber>
    </recommendedName>
    <alternativeName>
        <fullName evidence="1">CMP-2-keto-3-deoxyoctulosonic acid synthase 2</fullName>
        <shortName evidence="1">CKS 2</shortName>
        <shortName evidence="1">CMP-KDO synthase 2</shortName>
    </alternativeName>
</protein>
<dbReference type="EC" id="2.7.7.38" evidence="1"/>
<dbReference type="EMBL" id="CP000569">
    <property type="protein sequence ID" value="ABN74661.1"/>
    <property type="molecule type" value="Genomic_DNA"/>
</dbReference>
<dbReference type="RefSeq" id="WP_009874575.1">
    <property type="nucleotide sequence ID" value="NC_009053.1"/>
</dbReference>
<dbReference type="SMR" id="A3N2M5"/>
<dbReference type="STRING" id="416269.APL_1577"/>
<dbReference type="EnsemblBacteria" id="ABN74661">
    <property type="protein sequence ID" value="ABN74661"/>
    <property type="gene ID" value="APL_1577"/>
</dbReference>
<dbReference type="KEGG" id="apl:APL_1577"/>
<dbReference type="PATRIC" id="fig|416269.6.peg.1643"/>
<dbReference type="eggNOG" id="COG1212">
    <property type="taxonomic scope" value="Bacteria"/>
</dbReference>
<dbReference type="HOGENOM" id="CLU_065038_1_0_6"/>
<dbReference type="UniPathway" id="UPA00030"/>
<dbReference type="UniPathway" id="UPA00358">
    <property type="reaction ID" value="UER00476"/>
</dbReference>
<dbReference type="Proteomes" id="UP000001432">
    <property type="component" value="Chromosome"/>
</dbReference>
<dbReference type="GO" id="GO:0005829">
    <property type="term" value="C:cytosol"/>
    <property type="evidence" value="ECO:0007669"/>
    <property type="project" value="TreeGrafter"/>
</dbReference>
<dbReference type="GO" id="GO:0008690">
    <property type="term" value="F:3-deoxy-manno-octulosonate cytidylyltransferase activity"/>
    <property type="evidence" value="ECO:0007669"/>
    <property type="project" value="UniProtKB-UniRule"/>
</dbReference>
<dbReference type="GO" id="GO:0033468">
    <property type="term" value="P:CMP-keto-3-deoxy-D-manno-octulosonic acid biosynthetic process"/>
    <property type="evidence" value="ECO:0007669"/>
    <property type="project" value="UniProtKB-UniRule"/>
</dbReference>
<dbReference type="GO" id="GO:0009103">
    <property type="term" value="P:lipopolysaccharide biosynthetic process"/>
    <property type="evidence" value="ECO:0007669"/>
    <property type="project" value="UniProtKB-UniRule"/>
</dbReference>
<dbReference type="CDD" id="cd02517">
    <property type="entry name" value="CMP-KDO-Synthetase"/>
    <property type="match status" value="1"/>
</dbReference>
<dbReference type="FunFam" id="3.90.550.10:FF:000011">
    <property type="entry name" value="3-deoxy-manno-octulosonate cytidylyltransferase"/>
    <property type="match status" value="1"/>
</dbReference>
<dbReference type="Gene3D" id="3.90.550.10">
    <property type="entry name" value="Spore Coat Polysaccharide Biosynthesis Protein SpsA, Chain A"/>
    <property type="match status" value="1"/>
</dbReference>
<dbReference type="HAMAP" id="MF_00057">
    <property type="entry name" value="KdsB"/>
    <property type="match status" value="1"/>
</dbReference>
<dbReference type="InterPro" id="IPR003329">
    <property type="entry name" value="Cytidylyl_trans"/>
</dbReference>
<dbReference type="InterPro" id="IPR004528">
    <property type="entry name" value="KdsB"/>
</dbReference>
<dbReference type="InterPro" id="IPR029044">
    <property type="entry name" value="Nucleotide-diphossugar_trans"/>
</dbReference>
<dbReference type="NCBIfam" id="TIGR00466">
    <property type="entry name" value="kdsB"/>
    <property type="match status" value="1"/>
</dbReference>
<dbReference type="NCBIfam" id="NF003950">
    <property type="entry name" value="PRK05450.1-3"/>
    <property type="match status" value="1"/>
</dbReference>
<dbReference type="NCBIfam" id="NF003952">
    <property type="entry name" value="PRK05450.1-5"/>
    <property type="match status" value="1"/>
</dbReference>
<dbReference type="NCBIfam" id="NF009905">
    <property type="entry name" value="PRK13368.1"/>
    <property type="match status" value="1"/>
</dbReference>
<dbReference type="PANTHER" id="PTHR42866">
    <property type="entry name" value="3-DEOXY-MANNO-OCTULOSONATE CYTIDYLYLTRANSFERASE"/>
    <property type="match status" value="1"/>
</dbReference>
<dbReference type="PANTHER" id="PTHR42866:SF2">
    <property type="entry name" value="3-DEOXY-MANNO-OCTULOSONATE CYTIDYLYLTRANSFERASE, MITOCHONDRIAL"/>
    <property type="match status" value="1"/>
</dbReference>
<dbReference type="Pfam" id="PF02348">
    <property type="entry name" value="CTP_transf_3"/>
    <property type="match status" value="1"/>
</dbReference>
<dbReference type="SUPFAM" id="SSF53448">
    <property type="entry name" value="Nucleotide-diphospho-sugar transferases"/>
    <property type="match status" value="1"/>
</dbReference>
<comment type="function">
    <text evidence="1">Activates KDO (a required 8-carbon sugar) for incorporation into bacterial lipopolysaccharide in Gram-negative bacteria.</text>
</comment>
<comment type="catalytic activity">
    <reaction evidence="1">
        <text>3-deoxy-alpha-D-manno-oct-2-ulosonate + CTP = CMP-3-deoxy-beta-D-manno-octulosonate + diphosphate</text>
        <dbReference type="Rhea" id="RHEA:23448"/>
        <dbReference type="ChEBI" id="CHEBI:33019"/>
        <dbReference type="ChEBI" id="CHEBI:37563"/>
        <dbReference type="ChEBI" id="CHEBI:85986"/>
        <dbReference type="ChEBI" id="CHEBI:85987"/>
        <dbReference type="EC" id="2.7.7.38"/>
    </reaction>
</comment>
<comment type="pathway">
    <text evidence="1">Nucleotide-sugar biosynthesis; CMP-3-deoxy-D-manno-octulosonate biosynthesis; CMP-3-deoxy-D-manno-octulosonate from 3-deoxy-D-manno-octulosonate and CTP: step 1/1.</text>
</comment>
<comment type="pathway">
    <text evidence="1">Bacterial outer membrane biogenesis; lipopolysaccharide biosynthesis.</text>
</comment>
<comment type="subcellular location">
    <subcellularLocation>
        <location evidence="1">Cytoplasm</location>
    </subcellularLocation>
</comment>
<comment type="similarity">
    <text evidence="1">Belongs to the KdsB family.</text>
</comment>
<gene>
    <name evidence="1" type="primary">kdsB2</name>
    <name type="ordered locus">APL_1577</name>
</gene>
<feature type="chain" id="PRO_0000369990" description="3-deoxy-manno-octulosonate cytidylyltransferase 2">
    <location>
        <begin position="1"/>
        <end position="252"/>
    </location>
</feature>
<sequence>MKFTIIIPARYASTRLPRKPLLDILGKPMIQHVWERAKQAGGHRVIIATDHSEIAEVVTRFGGEVCLTSDKHSSGTERLAEVVSKMNISDDEIIVNVQGDEPLIPPCIIKQVAENLDNHQVNMATLAVKLTQRDELFNPNVVKVLSDKNGMALYFSRAAIPFARDNFPDCSDDFVTQNQYLRHIGIYAYRAGFIKQYVQWQPTALEQLESLEQLRALWNGEKIHLDIALETPEVGVDTQEDLERVRLILSNK</sequence>
<reference key="1">
    <citation type="journal article" date="2008" name="J. Bacteriol.">
        <title>The complete genome sequence of Actinobacillus pleuropneumoniae L20 (serotype 5b).</title>
        <authorList>
            <person name="Foote S.J."/>
            <person name="Bosse J.T."/>
            <person name="Bouevitch A.B."/>
            <person name="Langford P.R."/>
            <person name="Young N.M."/>
            <person name="Nash J.H.E."/>
        </authorList>
    </citation>
    <scope>NUCLEOTIDE SEQUENCE [LARGE SCALE GENOMIC DNA]</scope>
    <source>
        <strain>L20</strain>
    </source>
</reference>
<name>KDSB2_ACTP2</name>
<evidence type="ECO:0000255" key="1">
    <source>
        <dbReference type="HAMAP-Rule" id="MF_00057"/>
    </source>
</evidence>
<proteinExistence type="inferred from homology"/>